<name>VE7_HPV41</name>
<accession>P27556</accession>
<dbReference type="EMBL" id="X56147">
    <property type="protein sequence ID" value="CAA39613.1"/>
    <property type="molecule type" value="Genomic_DNA"/>
</dbReference>
<dbReference type="PIR" id="B43550">
    <property type="entry name" value="W7WL41"/>
</dbReference>
<dbReference type="SMR" id="P27556"/>
<dbReference type="KEGG" id="vg:1489282"/>
<dbReference type="OrthoDB" id="28045at10239"/>
<dbReference type="Proteomes" id="UP000006367">
    <property type="component" value="Genome"/>
</dbReference>
<dbReference type="GO" id="GO:0030430">
    <property type="term" value="C:host cell cytoplasm"/>
    <property type="evidence" value="ECO:0007669"/>
    <property type="project" value="UniProtKB-SubCell"/>
</dbReference>
<dbReference type="GO" id="GO:0042025">
    <property type="term" value="C:host cell nucleus"/>
    <property type="evidence" value="ECO:0007669"/>
    <property type="project" value="UniProtKB-SubCell"/>
</dbReference>
<dbReference type="GO" id="GO:0003677">
    <property type="term" value="F:DNA binding"/>
    <property type="evidence" value="ECO:0007669"/>
    <property type="project" value="UniProtKB-UniRule"/>
</dbReference>
<dbReference type="GO" id="GO:0003700">
    <property type="term" value="F:DNA-binding transcription factor activity"/>
    <property type="evidence" value="ECO:0007669"/>
    <property type="project" value="UniProtKB-UniRule"/>
</dbReference>
<dbReference type="GO" id="GO:0019904">
    <property type="term" value="F:protein domain specific binding"/>
    <property type="evidence" value="ECO:0007669"/>
    <property type="project" value="UniProtKB-UniRule"/>
</dbReference>
<dbReference type="GO" id="GO:0008270">
    <property type="term" value="F:zinc ion binding"/>
    <property type="evidence" value="ECO:0007669"/>
    <property type="project" value="UniProtKB-KW"/>
</dbReference>
<dbReference type="GO" id="GO:0006351">
    <property type="term" value="P:DNA-templated transcription"/>
    <property type="evidence" value="ECO:0007669"/>
    <property type="project" value="UniProtKB-UniRule"/>
</dbReference>
<dbReference type="GO" id="GO:0039645">
    <property type="term" value="P:symbiont-mediated perturbation of host cell cycle G1/S transition checkpoint"/>
    <property type="evidence" value="ECO:0007669"/>
    <property type="project" value="UniProtKB-UniRule"/>
</dbReference>
<dbReference type="GO" id="GO:0052170">
    <property type="term" value="P:symbiont-mediated suppression of host innate immune response"/>
    <property type="evidence" value="ECO:0007669"/>
    <property type="project" value="UniProtKB-KW"/>
</dbReference>
<dbReference type="GO" id="GO:0039502">
    <property type="term" value="P:symbiont-mediated suppression of host type I interferon-mediated signaling pathway"/>
    <property type="evidence" value="ECO:0007669"/>
    <property type="project" value="UniProtKB-UniRule"/>
</dbReference>
<dbReference type="Gene3D" id="3.30.160.330">
    <property type="match status" value="1"/>
</dbReference>
<dbReference type="HAMAP" id="MF_04004">
    <property type="entry name" value="PPV_E7"/>
    <property type="match status" value="1"/>
</dbReference>
<dbReference type="InterPro" id="IPR000148">
    <property type="entry name" value="Papilloma_E7"/>
</dbReference>
<dbReference type="Pfam" id="PF00527">
    <property type="entry name" value="E7"/>
    <property type="match status" value="1"/>
</dbReference>
<dbReference type="PIRSF" id="PIRSF003407">
    <property type="entry name" value="Papvi_E7"/>
    <property type="match status" value="1"/>
</dbReference>
<dbReference type="SUPFAM" id="SSF161234">
    <property type="entry name" value="E7 C-terminal domain-like"/>
    <property type="match status" value="1"/>
</dbReference>
<organism>
    <name type="scientific">Human papillomavirus type 41</name>
    <dbReference type="NCBI Taxonomy" id="10589"/>
    <lineage>
        <taxon>Viruses</taxon>
        <taxon>Monodnaviria</taxon>
        <taxon>Shotokuvirae</taxon>
        <taxon>Cossaviricota</taxon>
        <taxon>Papovaviricetes</taxon>
        <taxon>Zurhausenvirales</taxon>
        <taxon>Papillomaviridae</taxon>
        <taxon>Firstpapillomavirinae</taxon>
        <taxon>Nupapillomavirus</taxon>
        <taxon>Nupapillomavirus 1</taxon>
    </lineage>
</organism>
<organismHost>
    <name type="scientific">Homo sapiens</name>
    <name type="common">Human</name>
    <dbReference type="NCBI Taxonomy" id="9606"/>
</organismHost>
<gene>
    <name evidence="1" type="primary">E7</name>
</gene>
<keyword id="KW-0010">Activator</keyword>
<keyword id="KW-0238">DNA-binding</keyword>
<keyword id="KW-0244">Early protein</keyword>
<keyword id="KW-1078">G1/S host cell cycle checkpoint dysregulation by virus</keyword>
<keyword id="KW-1035">Host cytoplasm</keyword>
<keyword id="KW-1048">Host nucleus</keyword>
<keyword id="KW-0945">Host-virus interaction</keyword>
<keyword id="KW-1090">Inhibition of host innate immune response by virus</keyword>
<keyword id="KW-1114">Inhibition of host interferon signaling pathway by virus</keyword>
<keyword id="KW-0922">Interferon antiviral system evasion</keyword>
<keyword id="KW-0479">Metal-binding</keyword>
<keyword id="KW-1121">Modulation of host cell cycle by virus</keyword>
<keyword id="KW-0553">Oncogene</keyword>
<keyword id="KW-1185">Reference proteome</keyword>
<keyword id="KW-0804">Transcription</keyword>
<keyword id="KW-0805">Transcription regulation</keyword>
<keyword id="KW-0899">Viral immunoevasion</keyword>
<keyword id="KW-0862">Zinc</keyword>
<keyword id="KW-0863">Zinc-finger</keyword>
<comment type="function">
    <text evidence="1">Plays a role in viral genome replication by driving entry of quiescent cells into the cell cycle. Stimulation of progression from G1 to S phase allows the virus to efficiently use the cellular DNA replicating machinery to achieve viral genome replication. E7 protein has both transforming and trans-activating activities. Induces the disassembly of the E2F1 transcription factor from RB1, with subsequent transcriptional activation of E2F1-regulated S-phase genes. Interferes with host histone deacetylation mediated by HDAC1 and HDAC2, leading to transcription activation. Also plays a role in the inhibition of both antiviral and antiproliferative functions of host interferon alpha. Interaction with host TMEM173/STING impairs the ability of TMEM173/STING to sense cytosolic DNA and promote the production of type I interferon (IFN-alpha and IFN-beta).</text>
</comment>
<comment type="subunit">
    <text evidence="1">Homodimer. Homooligomer. Interacts with host RB1; this interaction induces dissociation of RB1-E2F1 complex thereby disrupting RB1 activity. Interacts with host EP300; this interaction represses EP300 transcriptional activity. Interacts with protein E2; this interaction inhibits E7 oncogenic activity. Interacts with host TMEM173/STING; this interaction impairs the ability of TMEM173/STING to sense cytosolic DNA and promote the production of type I interferon (IFN-alpha and IFN-beta).</text>
</comment>
<comment type="subcellular location">
    <subcellularLocation>
        <location evidence="1">Host cytoplasm</location>
    </subcellularLocation>
    <subcellularLocation>
        <location evidence="1">Host nucleus</location>
    </subcellularLocation>
    <text evidence="1">Predominantly found in the host nucleus.</text>
</comment>
<comment type="domain">
    <text evidence="1">The E7 terminal domain is an intrinsically disordered domain, whose flexibility and conformational transitions confer target adaptability to the oncoprotein. It allows adaptation to a variety of protein targets and exposes the PEST degradation sequence that regulates its turnover in the cell.</text>
</comment>
<comment type="PTM">
    <text evidence="1">Highly phosphorylated.</text>
</comment>
<comment type="similarity">
    <text evidence="1">Belongs to the papillomaviridae E7 protein family.</text>
</comment>
<reference key="1">
    <citation type="journal article" date="1991" name="Virus Res.">
        <title>Nucleotide sequence of human papillomavirus (HPV) type 41: an unusual HPV type without a typical E2 binding site consensus sequence.</title>
        <authorList>
            <person name="Hirt L."/>
            <person name="Hirsch-Behnam A."/>
            <person name="de Villiers E.M."/>
        </authorList>
    </citation>
    <scope>NUCLEOTIDE SEQUENCE [GENOMIC DNA]</scope>
</reference>
<reference key="2">
    <citation type="journal article" date="2002" name="Rev. Med. Virol.">
        <title>Interactions of SV40 large T antigen and other viral proteins with retinoblastoma tumour suppressor.</title>
        <authorList>
            <person name="Lee C."/>
            <person name="Cho Y."/>
        </authorList>
    </citation>
    <scope>REVIEW</scope>
</reference>
<protein>
    <recommendedName>
        <fullName evidence="1">Protein E7</fullName>
    </recommendedName>
</protein>
<evidence type="ECO:0000255" key="1">
    <source>
        <dbReference type="HAMAP-Rule" id="MF_04004"/>
    </source>
</evidence>
<evidence type="ECO:0000256" key="2">
    <source>
        <dbReference type="SAM" id="MobiDB-lite"/>
    </source>
</evidence>
<feature type="chain" id="PRO_0000133439" description="Protein E7">
    <location>
        <begin position="1"/>
        <end position="114"/>
    </location>
</feature>
<feature type="zinc finger region" evidence="1">
    <location>
        <begin position="62"/>
        <end position="99"/>
    </location>
</feature>
<feature type="region of interest" description="E7 terminal domain" evidence="1">
    <location>
        <begin position="1"/>
        <end position="43"/>
    </location>
</feature>
<feature type="region of interest" description="Disordered" evidence="2">
    <location>
        <begin position="17"/>
        <end position="49"/>
    </location>
</feature>
<feature type="short sequence motif" description="Nuclear export signal" evidence="1">
    <location>
        <begin position="80"/>
        <end position="88"/>
    </location>
</feature>
<feature type="compositionally biased region" description="Acidic residues" evidence="2">
    <location>
        <begin position="31"/>
        <end position="42"/>
    </location>
</feature>
<sequence length="114" mass="12804">MRGNSVDLQEIVLVQQGEVPENAAVHSGEHSDDEGESEEEEREQVQQVPTPRRTLYLVESQCPFCQAIIRFVCVASNTGIRNLQALLVNSHLDLACHACVEQNGVQGLRHRQWQ</sequence>
<proteinExistence type="inferred from homology"/>